<sequence length="221" mass="23948">MALPSVTALQVENVAFPPTLIKPPASANTLFLGGAGERGLHIQDKFVKFTAIGIYLQDTAVPSLAVKWKGKPVDELTESVQFFRDIVTGPFEKFMQVTMILPLTGQQYSEKVSENCVAIWKHLGIYTDEEGKAIDKFVSVFKDQTFPPGSSILFTVLPKGSLAISFSKDGSIPEVESAVIDNKLLSEAVLESMIGAHGVSPAAKQSLASRLSELFKHHAEV</sequence>
<name>CFI2_LOTJA</name>
<evidence type="ECO:0000250" key="1"/>
<evidence type="ECO:0000269" key="2">
    <source>
    </source>
</evidence>
<evidence type="ECO:0000305" key="3"/>
<organism>
    <name type="scientific">Lotus japonicus</name>
    <name type="common">Lotus corniculatus var. japonicus</name>
    <dbReference type="NCBI Taxonomy" id="34305"/>
    <lineage>
        <taxon>Eukaryota</taxon>
        <taxon>Viridiplantae</taxon>
        <taxon>Streptophyta</taxon>
        <taxon>Embryophyta</taxon>
        <taxon>Tracheophyta</taxon>
        <taxon>Spermatophyta</taxon>
        <taxon>Magnoliopsida</taxon>
        <taxon>eudicotyledons</taxon>
        <taxon>Gunneridae</taxon>
        <taxon>Pentapetalae</taxon>
        <taxon>rosids</taxon>
        <taxon>fabids</taxon>
        <taxon>Fabales</taxon>
        <taxon>Fabaceae</taxon>
        <taxon>Papilionoideae</taxon>
        <taxon>50 kb inversion clade</taxon>
        <taxon>NPAAA clade</taxon>
        <taxon>Hologalegina</taxon>
        <taxon>robinioid clade</taxon>
        <taxon>Loteae</taxon>
        <taxon>Lotus</taxon>
    </lineage>
</organism>
<protein>
    <recommendedName>
        <fullName>Chalcone--flavanone isomerase 2</fullName>
        <shortName>Chalcone isomerase 2</shortName>
        <ecNumber>5.5.1.6</ecNumber>
    </recommendedName>
</protein>
<keyword id="KW-0284">Flavonoid biosynthesis</keyword>
<keyword id="KW-0413">Isomerase</keyword>
<gene>
    <name type="primary">CHI2</name>
</gene>
<feature type="chain" id="PRO_0000300843" description="Chalcone--flavanone isomerase 2">
    <location>
        <begin position="1"/>
        <end position="221"/>
    </location>
</feature>
<feature type="binding site" evidence="1">
    <location>
        <position position="50"/>
    </location>
    <ligand>
        <name>substrate</name>
    </ligand>
</feature>
<feature type="binding site" evidence="1">
    <location>
        <position position="115"/>
    </location>
    <ligand>
        <name>substrate</name>
    </ligand>
</feature>
<feature type="binding site" evidence="1">
    <location>
        <position position="192"/>
    </location>
    <ligand>
        <name>substrate</name>
    </ligand>
</feature>
<feature type="site" description="Important for catalytic activity" evidence="1">
    <location>
        <position position="108"/>
    </location>
</feature>
<comment type="function">
    <text evidence="2">Catalyzes the intramolecular cyclization of bicyclic chalcones into tricyclic (S)-flavanones. Responsible for the isomerization of 4,2',4',6'-tetrahydroxychalcone (also termed chalcone) into naringenin.</text>
</comment>
<comment type="catalytic activity">
    <reaction>
        <text>a chalcone = a flavanone.</text>
        <dbReference type="EC" id="5.5.1.6"/>
    </reaction>
</comment>
<comment type="pathway">
    <text>Secondary metabolite biosynthesis; flavonoid biosynthesis.</text>
</comment>
<comment type="miscellaneous">
    <text>Part of the biosynthetic pathway for all classes of flavonoids, a large class of secondary plant metabolites, many of which are brightly colored.</text>
</comment>
<comment type="similarity">
    <text evidence="3">Belongs to the chalcone isomerase family.</text>
</comment>
<accession>Q8H0G1</accession>
<dbReference type="EC" id="5.5.1.6"/>
<dbReference type="EMBL" id="AB054802">
    <property type="protein sequence ID" value="BAC53984.1"/>
    <property type="molecule type" value="mRNA"/>
</dbReference>
<dbReference type="SMR" id="Q8H0G1"/>
<dbReference type="ProMEX" id="Q8H0G1"/>
<dbReference type="OMA" id="CGADSEK"/>
<dbReference type="OrthoDB" id="1903537at2759"/>
<dbReference type="UniPathway" id="UPA00154"/>
<dbReference type="GO" id="GO:0045430">
    <property type="term" value="F:chalcone isomerase activity"/>
    <property type="evidence" value="ECO:0007669"/>
    <property type="project" value="UniProtKB-EC"/>
</dbReference>
<dbReference type="GO" id="GO:0009813">
    <property type="term" value="P:flavonoid biosynthetic process"/>
    <property type="evidence" value="ECO:0007669"/>
    <property type="project" value="UniProtKB-UniPathway"/>
</dbReference>
<dbReference type="Gene3D" id="1.10.890.20">
    <property type="match status" value="1"/>
</dbReference>
<dbReference type="Gene3D" id="3.50.70.10">
    <property type="match status" value="1"/>
</dbReference>
<dbReference type="InterPro" id="IPR044164">
    <property type="entry name" value="CFI"/>
</dbReference>
<dbReference type="InterPro" id="IPR016087">
    <property type="entry name" value="Chalcone_isomerase"/>
</dbReference>
<dbReference type="InterPro" id="IPR016088">
    <property type="entry name" value="Chalcone_isomerase_3-sand"/>
</dbReference>
<dbReference type="InterPro" id="IPR016089">
    <property type="entry name" value="Chalcone_isomerase_bundle_sf"/>
</dbReference>
<dbReference type="InterPro" id="IPR036298">
    <property type="entry name" value="Chalcone_isomerase_sf"/>
</dbReference>
<dbReference type="PANTHER" id="PTHR28039:SF8">
    <property type="entry name" value="CHALCONE--FLAVANONE ISOMERASE 1-RELATED"/>
    <property type="match status" value="1"/>
</dbReference>
<dbReference type="PANTHER" id="PTHR28039">
    <property type="entry name" value="CHALCONE--FLAVONONE ISOMERASE 1-RELATED"/>
    <property type="match status" value="1"/>
</dbReference>
<dbReference type="Pfam" id="PF02431">
    <property type="entry name" value="Chalcone"/>
    <property type="match status" value="1"/>
</dbReference>
<dbReference type="SUPFAM" id="SSF54626">
    <property type="entry name" value="Chalcone isomerase"/>
    <property type="match status" value="1"/>
</dbReference>
<proteinExistence type="evidence at transcript level"/>
<reference key="1">
    <citation type="journal article" date="2003" name="Plant Physiol.">
        <title>A cluster of genes encodes the two types of chalcone isomerase involved in the biosynthesis of general flavonoids and legume-specific 5-deoxy(iso)flavonoids in Lotus japonicus.</title>
        <authorList>
            <person name="Shimada N."/>
            <person name="Aoki T."/>
            <person name="Sato S."/>
            <person name="Nakamura Y."/>
            <person name="Tabata S."/>
            <person name="Ayabe S."/>
        </authorList>
    </citation>
    <scope>NUCLEOTIDE SEQUENCE [MRNA]</scope>
    <scope>FUNCTION</scope>
    <source>
        <strain>cv. Gifu / B-129</strain>
        <tissue>Root</tissue>
    </source>
</reference>